<dbReference type="EC" id="2.7.8.7" evidence="1"/>
<dbReference type="EMBL" id="AE000516">
    <property type="protein sequence ID" value="AAK46906.1"/>
    <property type="molecule type" value="Genomic_DNA"/>
</dbReference>
<dbReference type="PIR" id="H70870">
    <property type="entry name" value="H70870"/>
</dbReference>
<dbReference type="RefSeq" id="WP_010924541.1">
    <property type="nucleotide sequence ID" value="NC_002755.2"/>
</dbReference>
<dbReference type="SMR" id="P9WQD2"/>
<dbReference type="KEGG" id="mtc:MT2599"/>
<dbReference type="HOGENOM" id="CLU_089696_2_0_11"/>
<dbReference type="Proteomes" id="UP000001020">
    <property type="component" value="Chromosome"/>
</dbReference>
<dbReference type="GO" id="GO:0005737">
    <property type="term" value="C:cytoplasm"/>
    <property type="evidence" value="ECO:0007669"/>
    <property type="project" value="UniProtKB-SubCell"/>
</dbReference>
<dbReference type="GO" id="GO:0008897">
    <property type="term" value="F:holo-[acyl-carrier-protein] synthase activity"/>
    <property type="evidence" value="ECO:0007669"/>
    <property type="project" value="UniProtKB-UniRule"/>
</dbReference>
<dbReference type="GO" id="GO:0000287">
    <property type="term" value="F:magnesium ion binding"/>
    <property type="evidence" value="ECO:0007669"/>
    <property type="project" value="UniProtKB-UniRule"/>
</dbReference>
<dbReference type="GO" id="GO:0006633">
    <property type="term" value="P:fatty acid biosynthetic process"/>
    <property type="evidence" value="ECO:0007669"/>
    <property type="project" value="UniProtKB-UniRule"/>
</dbReference>
<dbReference type="Gene3D" id="3.90.470.20">
    <property type="entry name" value="4'-phosphopantetheinyl transferase domain"/>
    <property type="match status" value="1"/>
</dbReference>
<dbReference type="HAMAP" id="MF_00101">
    <property type="entry name" value="AcpS"/>
    <property type="match status" value="1"/>
</dbReference>
<dbReference type="InterPro" id="IPR008278">
    <property type="entry name" value="4-PPantetheinyl_Trfase_dom"/>
</dbReference>
<dbReference type="InterPro" id="IPR037143">
    <property type="entry name" value="4-PPantetheinyl_Trfase_dom_sf"/>
</dbReference>
<dbReference type="InterPro" id="IPR002582">
    <property type="entry name" value="ACPS"/>
</dbReference>
<dbReference type="InterPro" id="IPR004568">
    <property type="entry name" value="Ppantetheine-prot_Trfase_dom"/>
</dbReference>
<dbReference type="NCBIfam" id="TIGR00556">
    <property type="entry name" value="pantethn_trn"/>
    <property type="match status" value="1"/>
</dbReference>
<dbReference type="NCBIfam" id="NF000831">
    <property type="entry name" value="PRK00070.3-1"/>
    <property type="match status" value="1"/>
</dbReference>
<dbReference type="Pfam" id="PF01648">
    <property type="entry name" value="ACPS"/>
    <property type="match status" value="1"/>
</dbReference>
<dbReference type="SUPFAM" id="SSF56214">
    <property type="entry name" value="4'-phosphopantetheinyl transferase"/>
    <property type="match status" value="1"/>
</dbReference>
<organism>
    <name type="scientific">Mycobacterium tuberculosis (strain CDC 1551 / Oshkosh)</name>
    <dbReference type="NCBI Taxonomy" id="83331"/>
    <lineage>
        <taxon>Bacteria</taxon>
        <taxon>Bacillati</taxon>
        <taxon>Actinomycetota</taxon>
        <taxon>Actinomycetes</taxon>
        <taxon>Mycobacteriales</taxon>
        <taxon>Mycobacteriaceae</taxon>
        <taxon>Mycobacterium</taxon>
        <taxon>Mycobacterium tuberculosis complex</taxon>
    </lineage>
</organism>
<evidence type="ECO:0000255" key="1">
    <source>
        <dbReference type="HAMAP-Rule" id="MF_00101"/>
    </source>
</evidence>
<keyword id="KW-0963">Cytoplasm</keyword>
<keyword id="KW-0275">Fatty acid biosynthesis</keyword>
<keyword id="KW-0276">Fatty acid metabolism</keyword>
<keyword id="KW-0444">Lipid biosynthesis</keyword>
<keyword id="KW-0443">Lipid metabolism</keyword>
<keyword id="KW-0460">Magnesium</keyword>
<keyword id="KW-0479">Metal-binding</keyword>
<keyword id="KW-1185">Reference proteome</keyword>
<keyword id="KW-0808">Transferase</keyword>
<protein>
    <recommendedName>
        <fullName evidence="1">Holo-[acyl-carrier-protein] synthase</fullName>
        <shortName evidence="1">Holo-ACP synthase</shortName>
        <ecNumber evidence="1">2.7.8.7</ecNumber>
    </recommendedName>
    <alternativeName>
        <fullName evidence="1">4'-phosphopantetheinyl transferase AcpS</fullName>
    </alternativeName>
</protein>
<proteinExistence type="inferred from homology"/>
<accession>P9WQD2</accession>
<accession>L0TCS3</accession>
<accession>O53228</accession>
<accession>P0A4W8</accession>
<reference key="1">
    <citation type="journal article" date="2002" name="J. Bacteriol.">
        <title>Whole-genome comparison of Mycobacterium tuberculosis clinical and laboratory strains.</title>
        <authorList>
            <person name="Fleischmann R.D."/>
            <person name="Alland D."/>
            <person name="Eisen J.A."/>
            <person name="Carpenter L."/>
            <person name="White O."/>
            <person name="Peterson J.D."/>
            <person name="DeBoy R.T."/>
            <person name="Dodson R.J."/>
            <person name="Gwinn M.L."/>
            <person name="Haft D.H."/>
            <person name="Hickey E.K."/>
            <person name="Kolonay J.F."/>
            <person name="Nelson W.C."/>
            <person name="Umayam L.A."/>
            <person name="Ermolaeva M.D."/>
            <person name="Salzberg S.L."/>
            <person name="Delcher A."/>
            <person name="Utterback T.R."/>
            <person name="Weidman J.F."/>
            <person name="Khouri H.M."/>
            <person name="Gill J."/>
            <person name="Mikula A."/>
            <person name="Bishai W."/>
            <person name="Jacobs W.R. Jr."/>
            <person name="Venter J.C."/>
            <person name="Fraser C.M."/>
        </authorList>
    </citation>
    <scope>NUCLEOTIDE SEQUENCE [LARGE SCALE GENOMIC DNA]</scope>
    <source>
        <strain>CDC 1551 / Oshkosh</strain>
    </source>
</reference>
<name>ACPS_MYCTO</name>
<comment type="function">
    <text evidence="1">Transfers the 4'-phosphopantetheine moiety from coenzyme A to a Ser of acyl-carrier-protein.</text>
</comment>
<comment type="catalytic activity">
    <reaction evidence="1">
        <text>apo-[ACP] + CoA = holo-[ACP] + adenosine 3',5'-bisphosphate + H(+)</text>
        <dbReference type="Rhea" id="RHEA:12068"/>
        <dbReference type="Rhea" id="RHEA-COMP:9685"/>
        <dbReference type="Rhea" id="RHEA-COMP:9690"/>
        <dbReference type="ChEBI" id="CHEBI:15378"/>
        <dbReference type="ChEBI" id="CHEBI:29999"/>
        <dbReference type="ChEBI" id="CHEBI:57287"/>
        <dbReference type="ChEBI" id="CHEBI:58343"/>
        <dbReference type="ChEBI" id="CHEBI:64479"/>
        <dbReference type="EC" id="2.7.8.7"/>
    </reaction>
</comment>
<comment type="cofactor">
    <cofactor evidence="1">
        <name>Mg(2+)</name>
        <dbReference type="ChEBI" id="CHEBI:18420"/>
    </cofactor>
</comment>
<comment type="subcellular location">
    <subcellularLocation>
        <location evidence="1">Cytoplasm</location>
    </subcellularLocation>
</comment>
<comment type="similarity">
    <text evidence="1">Belongs to the P-Pant transferase superfamily. AcpS family.</text>
</comment>
<gene>
    <name evidence="1" type="primary">acpS</name>
    <name type="ordered locus">MT2599</name>
</gene>
<sequence length="130" mass="14005">MGIVGVGIDLVSIPDFAEQVDQPGTVFAETFTPGERRDASDKSSSAARLPLARWAAKEAVIKAWSGSRFAQRPVLPEDIHRDIEVVTDMWGRPRVRLTGAIAEYLADVTIHVSLTHEGDTAAAVAILEAP</sequence>
<feature type="chain" id="PRO_0000426796" description="Holo-[acyl-carrier-protein] synthase">
    <location>
        <begin position="1"/>
        <end position="130"/>
    </location>
</feature>
<feature type="binding site" evidence="1">
    <location>
        <position position="9"/>
    </location>
    <ligand>
        <name>Mg(2+)</name>
        <dbReference type="ChEBI" id="CHEBI:18420"/>
    </ligand>
</feature>
<feature type="binding site" evidence="1">
    <location>
        <position position="58"/>
    </location>
    <ligand>
        <name>Mg(2+)</name>
        <dbReference type="ChEBI" id="CHEBI:18420"/>
    </ligand>
</feature>